<evidence type="ECO:0000250" key="1"/>
<evidence type="ECO:0000255" key="2"/>
<evidence type="ECO:0000305" key="3"/>
<gene>
    <name type="primary">drp35</name>
    <name type="ordered locus">SAUSA300_2621</name>
</gene>
<feature type="chain" id="PRO_0000259753" description="Lactonase drp35">
    <location>
        <begin position="1"/>
        <end position="324"/>
    </location>
</feature>
<feature type="active site" description="Proton donor" evidence="2">
    <location>
        <position position="235"/>
    </location>
</feature>
<feature type="binding site" evidence="1">
    <location>
        <position position="47"/>
    </location>
    <ligand>
        <name>Ca(2+)</name>
        <dbReference type="ChEBI" id="CHEBI:29108"/>
        <label>1</label>
        <note>catalytic</note>
    </ligand>
</feature>
<feature type="binding site" evidence="1">
    <location>
        <position position="109"/>
    </location>
    <ligand>
        <name>Ca(2+)</name>
        <dbReference type="ChEBI" id="CHEBI:29108"/>
        <label>2</label>
    </ligand>
</feature>
<feature type="binding site" evidence="1">
    <location>
        <position position="111"/>
    </location>
    <ligand>
        <name>Ca(2+)</name>
        <dbReference type="ChEBI" id="CHEBI:29108"/>
        <label>2</label>
    </ligand>
</feature>
<feature type="binding site" evidence="1">
    <location>
        <position position="129"/>
    </location>
    <ligand>
        <name>Ca(2+)</name>
        <dbReference type="ChEBI" id="CHEBI:29108"/>
        <label>2</label>
    </ligand>
</feature>
<feature type="binding site" evidence="1">
    <location>
        <position position="132"/>
    </location>
    <ligand>
        <name>Ca(2+)</name>
        <dbReference type="ChEBI" id="CHEBI:29108"/>
        <label>2</label>
    </ligand>
</feature>
<feature type="binding site" evidence="1">
    <location>
        <position position="134"/>
    </location>
    <ligand>
        <name>Ca(2+)</name>
        <dbReference type="ChEBI" id="CHEBI:29108"/>
        <label>2</label>
    </ligand>
</feature>
<feature type="binding site" evidence="1">
    <location>
        <position position="137"/>
    </location>
    <ligand>
        <name>Ca(2+)</name>
        <dbReference type="ChEBI" id="CHEBI:29108"/>
        <label>1</label>
        <note>catalytic</note>
    </ligand>
</feature>
<feature type="binding site" evidence="1">
    <location>
        <position position="184"/>
    </location>
    <ligand>
        <name>Ca(2+)</name>
        <dbReference type="ChEBI" id="CHEBI:29108"/>
        <label>1</label>
        <note>catalytic</note>
    </ligand>
</feature>
<feature type="binding site" evidence="1">
    <location>
        <position position="235"/>
    </location>
    <ligand>
        <name>Ca(2+)</name>
        <dbReference type="ChEBI" id="CHEBI:29108"/>
        <label>1</label>
        <note>catalytic</note>
    </ligand>
</feature>
<feature type="binding site" evidence="1">
    <location>
        <position position="236"/>
    </location>
    <ligand>
        <name>Ca(2+)</name>
        <dbReference type="ChEBI" id="CHEBI:29108"/>
        <label>1</label>
        <note>catalytic</note>
    </ligand>
</feature>
<comment type="function">
    <text evidence="1">Exhibits lactonase activity. Acts in cells with perturbed membrane integrity and is possibly related to the membrane homeostasis (By similarity).</text>
</comment>
<comment type="cofactor">
    <cofactor evidence="1">
        <name>Ca(2+)</name>
        <dbReference type="ChEBI" id="CHEBI:29108"/>
    </cofactor>
    <text evidence="1">Binds 2 Ca(2+) ions per subunit.</text>
</comment>
<comment type="subcellular location">
    <subcellularLocation>
        <location evidence="1">Cytoplasm</location>
    </subcellularLocation>
</comment>
<comment type="similarity">
    <text evidence="3">Belongs to the SMP-30/CGR1 family.</text>
</comment>
<comment type="sequence caution" evidence="3">
    <conflict type="erroneous initiation">
        <sequence resource="EMBL-CDS" id="ABD22421"/>
    </conflict>
</comment>
<reference key="1">
    <citation type="journal article" date="2006" name="Lancet">
        <title>Complete genome sequence of USA300, an epidemic clone of community-acquired meticillin-resistant Staphylococcus aureus.</title>
        <authorList>
            <person name="Diep B.A."/>
            <person name="Gill S.R."/>
            <person name="Chang R.F."/>
            <person name="Phan T.H."/>
            <person name="Chen J.H."/>
            <person name="Davidson M.G."/>
            <person name="Lin F."/>
            <person name="Lin J."/>
            <person name="Carleton H.A."/>
            <person name="Mongodin E.F."/>
            <person name="Sensabaugh G.F."/>
            <person name="Perdreau-Remington F."/>
        </authorList>
    </citation>
    <scope>NUCLEOTIDE SEQUENCE [LARGE SCALE GENOMIC DNA]</scope>
    <source>
        <strain>USA300</strain>
    </source>
</reference>
<accession>Q2FDH3</accession>
<dbReference type="EC" id="3.1.1.-"/>
<dbReference type="EMBL" id="CP000255">
    <property type="protein sequence ID" value="ABD22421.1"/>
    <property type="status" value="ALT_INIT"/>
    <property type="molecule type" value="Genomic_DNA"/>
</dbReference>
<dbReference type="SMR" id="Q2FDH3"/>
<dbReference type="KEGG" id="saa:SAUSA300_2621"/>
<dbReference type="HOGENOM" id="CLU_036110_2_0_9"/>
<dbReference type="Proteomes" id="UP000001939">
    <property type="component" value="Chromosome"/>
</dbReference>
<dbReference type="GO" id="GO:0005737">
    <property type="term" value="C:cytoplasm"/>
    <property type="evidence" value="ECO:0007669"/>
    <property type="project" value="UniProtKB-SubCell"/>
</dbReference>
<dbReference type="GO" id="GO:0016787">
    <property type="term" value="F:hydrolase activity"/>
    <property type="evidence" value="ECO:0007669"/>
    <property type="project" value="UniProtKB-KW"/>
</dbReference>
<dbReference type="GO" id="GO:0046872">
    <property type="term" value="F:metal ion binding"/>
    <property type="evidence" value="ECO:0007669"/>
    <property type="project" value="UniProtKB-KW"/>
</dbReference>
<dbReference type="Gene3D" id="2.120.10.30">
    <property type="entry name" value="TolB, C-terminal domain"/>
    <property type="match status" value="1"/>
</dbReference>
<dbReference type="InterPro" id="IPR011042">
    <property type="entry name" value="6-blade_b-propeller_TolB-like"/>
</dbReference>
<dbReference type="InterPro" id="IPR013658">
    <property type="entry name" value="SGL"/>
</dbReference>
<dbReference type="InterPro" id="IPR051262">
    <property type="entry name" value="SMP-30/CGR1_Lactonase"/>
</dbReference>
<dbReference type="PANTHER" id="PTHR47572:SF4">
    <property type="entry name" value="LACTONASE DRP35"/>
    <property type="match status" value="1"/>
</dbReference>
<dbReference type="PANTHER" id="PTHR47572">
    <property type="entry name" value="LIPOPROTEIN-RELATED"/>
    <property type="match status" value="1"/>
</dbReference>
<dbReference type="Pfam" id="PF08450">
    <property type="entry name" value="SGL"/>
    <property type="match status" value="1"/>
</dbReference>
<dbReference type="SUPFAM" id="SSF63829">
    <property type="entry name" value="Calcium-dependent phosphotriesterase"/>
    <property type="match status" value="1"/>
</dbReference>
<protein>
    <recommendedName>
        <fullName>Lactonase drp35</fullName>
        <ecNumber>3.1.1.-</ecNumber>
    </recommendedName>
</protein>
<proteinExistence type="inferred from homology"/>
<keyword id="KW-0106">Calcium</keyword>
<keyword id="KW-0963">Cytoplasm</keyword>
<keyword id="KW-0378">Hydrolase</keyword>
<keyword id="KW-0479">Metal-binding</keyword>
<name>DRP35_STAA3</name>
<sequence>MMSQQDLPTLFYSGKSNSAVPIISESELQTITAEPWLEISKKGLQLEGLNFDRQGQLFLLDVFEGNIFKINPETKEIKRPFVSHKANPAAIKIHKDGRLFVCYLGDFKSTGGIFAATENGDNLQDIIEDLSTAYCIDDMVFDSKGGFYFTDFRGYSTNPLGGVYYVSPDFRTVTPIIQNISVANGIALSTDEKVLWVTETTANRLHRIALEDDGVTIQPFGATIPYYFTGHEGPDSCCIDSDDNLYVAMYGQGRVLVFNKRGYPIGQILIPGRDEGHMLRSTHPQFIPGTNQLIICSNDIEMGGGSMLYTVNGFAKGHQSFQFQ</sequence>
<organism>
    <name type="scientific">Staphylococcus aureus (strain USA300)</name>
    <dbReference type="NCBI Taxonomy" id="367830"/>
    <lineage>
        <taxon>Bacteria</taxon>
        <taxon>Bacillati</taxon>
        <taxon>Bacillota</taxon>
        <taxon>Bacilli</taxon>
        <taxon>Bacillales</taxon>
        <taxon>Staphylococcaceae</taxon>
        <taxon>Staphylococcus</taxon>
    </lineage>
</organism>